<reference key="1">
    <citation type="journal article" date="1997" name="J. Bacteriol.">
        <title>Complete genome sequence of Methanobacterium thermoautotrophicum deltaH: functional analysis and comparative genomics.</title>
        <authorList>
            <person name="Smith D.R."/>
            <person name="Doucette-Stamm L.A."/>
            <person name="Deloughery C."/>
            <person name="Lee H.-M."/>
            <person name="Dubois J."/>
            <person name="Aldredge T."/>
            <person name="Bashirzadeh R."/>
            <person name="Blakely D."/>
            <person name="Cook R."/>
            <person name="Gilbert K."/>
            <person name="Harrison D."/>
            <person name="Hoang L."/>
            <person name="Keagle P."/>
            <person name="Lumm W."/>
            <person name="Pothier B."/>
            <person name="Qiu D."/>
            <person name="Spadafora R."/>
            <person name="Vicare R."/>
            <person name="Wang Y."/>
            <person name="Wierzbowski J."/>
            <person name="Gibson R."/>
            <person name="Jiwani N."/>
            <person name="Caruso A."/>
            <person name="Bush D."/>
            <person name="Safer H."/>
            <person name="Patwell D."/>
            <person name="Prabhakar S."/>
            <person name="McDougall S."/>
            <person name="Shimer G."/>
            <person name="Goyal A."/>
            <person name="Pietrovski S."/>
            <person name="Church G.M."/>
            <person name="Daniels C.J."/>
            <person name="Mao J.-I."/>
            <person name="Rice P."/>
            <person name="Noelling J."/>
            <person name="Reeve J.N."/>
        </authorList>
    </citation>
    <scope>NUCLEOTIDE SEQUENCE [LARGE SCALE GENOMIC DNA]</scope>
    <source>
        <strain>ATCC 29096 / DSM 1053 / JCM 10044 / NBRC 100330 / Delta H</strain>
    </source>
</reference>
<proteinExistence type="inferred from homology"/>
<evidence type="ECO:0000255" key="1">
    <source>
        <dbReference type="HAMAP-Rule" id="MF_01364"/>
    </source>
</evidence>
<evidence type="ECO:0000305" key="2"/>
<keyword id="KW-0479">Metal-binding</keyword>
<keyword id="KW-1185">Reference proteome</keyword>
<keyword id="KW-0687">Ribonucleoprotein</keyword>
<keyword id="KW-0689">Ribosomal protein</keyword>
<keyword id="KW-0694">RNA-binding</keyword>
<keyword id="KW-0699">rRNA-binding</keyword>
<keyword id="KW-0862">Zinc</keyword>
<sequence>MIVLPRKYGKASRKCSRCGDHSALVRRYGLMLCRQCFRELAPKIGFKKYN</sequence>
<accession>O26125</accession>
<organism>
    <name type="scientific">Methanothermobacter thermautotrophicus (strain ATCC 29096 / DSM 1053 / JCM 10044 / NBRC 100330 / Delta H)</name>
    <name type="common">Methanobacterium thermoautotrophicum</name>
    <dbReference type="NCBI Taxonomy" id="187420"/>
    <lineage>
        <taxon>Archaea</taxon>
        <taxon>Methanobacteriati</taxon>
        <taxon>Methanobacteriota</taxon>
        <taxon>Methanomada group</taxon>
        <taxon>Methanobacteria</taxon>
        <taxon>Methanobacteriales</taxon>
        <taxon>Methanobacteriaceae</taxon>
        <taxon>Methanothermobacter</taxon>
    </lineage>
</organism>
<comment type="function">
    <text evidence="1">Binds 16S rRNA, required for the assembly of 30S particles.</text>
</comment>
<comment type="cofactor">
    <cofactor evidence="1">
        <name>Zn(2+)</name>
        <dbReference type="ChEBI" id="CHEBI:29105"/>
    </cofactor>
    <text evidence="1">Binds 1 zinc ion per subunit.</text>
</comment>
<comment type="subunit">
    <text evidence="1">Part of the 30S ribosomal subunit.</text>
</comment>
<comment type="similarity">
    <text evidence="1">Belongs to the universal ribosomal protein uS14 family. Zinc-binding uS14 subfamily.</text>
</comment>
<feature type="chain" id="PRO_0000130994" description="Small ribosomal subunit protein uS14">
    <location>
        <begin position="1"/>
        <end position="50"/>
    </location>
</feature>
<feature type="binding site" evidence="1">
    <location>
        <position position="15"/>
    </location>
    <ligand>
        <name>Zn(2+)</name>
        <dbReference type="ChEBI" id="CHEBI:29105"/>
    </ligand>
</feature>
<feature type="binding site" evidence="1">
    <location>
        <position position="18"/>
    </location>
    <ligand>
        <name>Zn(2+)</name>
        <dbReference type="ChEBI" id="CHEBI:29105"/>
    </ligand>
</feature>
<feature type="binding site" evidence="1">
    <location>
        <position position="33"/>
    </location>
    <ligand>
        <name>Zn(2+)</name>
        <dbReference type="ChEBI" id="CHEBI:29105"/>
    </ligand>
</feature>
<feature type="binding site" evidence="1">
    <location>
        <position position="36"/>
    </location>
    <ligand>
        <name>Zn(2+)</name>
        <dbReference type="ChEBI" id="CHEBI:29105"/>
    </ligand>
</feature>
<dbReference type="EMBL" id="AE000666">
    <property type="protein sequence ID" value="AAB84518.1"/>
    <property type="molecule type" value="Genomic_DNA"/>
</dbReference>
<dbReference type="PIR" id="C69094">
    <property type="entry name" value="C69094"/>
</dbReference>
<dbReference type="RefSeq" id="WP_010875659.1">
    <property type="nucleotide sequence ID" value="NC_000916.1"/>
</dbReference>
<dbReference type="SMR" id="O26125"/>
<dbReference type="FunCoup" id="O26125">
    <property type="interactions" value="125"/>
</dbReference>
<dbReference type="STRING" id="187420.MTH_17"/>
<dbReference type="PaxDb" id="187420-MTH_17"/>
<dbReference type="EnsemblBacteria" id="AAB84518">
    <property type="protein sequence ID" value="AAB84518"/>
    <property type="gene ID" value="MTH_17"/>
</dbReference>
<dbReference type="GeneID" id="92393099"/>
<dbReference type="KEGG" id="mth:MTH_17"/>
<dbReference type="PATRIC" id="fig|187420.15.peg.17"/>
<dbReference type="HOGENOM" id="CLU_177289_2_2_2"/>
<dbReference type="InParanoid" id="O26125"/>
<dbReference type="Proteomes" id="UP000005223">
    <property type="component" value="Chromosome"/>
</dbReference>
<dbReference type="GO" id="GO:0022627">
    <property type="term" value="C:cytosolic small ribosomal subunit"/>
    <property type="evidence" value="ECO:0007669"/>
    <property type="project" value="TreeGrafter"/>
</dbReference>
<dbReference type="GO" id="GO:0019843">
    <property type="term" value="F:rRNA binding"/>
    <property type="evidence" value="ECO:0007669"/>
    <property type="project" value="UniProtKB-UniRule"/>
</dbReference>
<dbReference type="GO" id="GO:0003735">
    <property type="term" value="F:structural constituent of ribosome"/>
    <property type="evidence" value="ECO:0007669"/>
    <property type="project" value="InterPro"/>
</dbReference>
<dbReference type="GO" id="GO:0008270">
    <property type="term" value="F:zinc ion binding"/>
    <property type="evidence" value="ECO:0007669"/>
    <property type="project" value="UniProtKB-UniRule"/>
</dbReference>
<dbReference type="GO" id="GO:0002181">
    <property type="term" value="P:cytoplasmic translation"/>
    <property type="evidence" value="ECO:0007669"/>
    <property type="project" value="TreeGrafter"/>
</dbReference>
<dbReference type="FunFam" id="4.10.830.10:FF:000002">
    <property type="entry name" value="40S ribosomal protein S29"/>
    <property type="match status" value="1"/>
</dbReference>
<dbReference type="Gene3D" id="4.10.830.10">
    <property type="entry name" value="30s Ribosomal Protein S14, Chain N"/>
    <property type="match status" value="1"/>
</dbReference>
<dbReference type="HAMAP" id="MF_01364_A">
    <property type="entry name" value="Ribosomal_uS14_2_A"/>
    <property type="match status" value="1"/>
</dbReference>
<dbReference type="InterPro" id="IPR001209">
    <property type="entry name" value="Ribosomal_uS14"/>
</dbReference>
<dbReference type="InterPro" id="IPR023676">
    <property type="entry name" value="Ribosomal_uS14_arc"/>
</dbReference>
<dbReference type="InterPro" id="IPR018271">
    <property type="entry name" value="Ribosomal_uS14_CS"/>
</dbReference>
<dbReference type="InterPro" id="IPR039744">
    <property type="entry name" value="RIbosomal_uS14_euk_arc"/>
</dbReference>
<dbReference type="InterPro" id="IPR043140">
    <property type="entry name" value="Ribosomal_uS14_sf"/>
</dbReference>
<dbReference type="NCBIfam" id="NF004424">
    <property type="entry name" value="PRK05766.1"/>
    <property type="match status" value="1"/>
</dbReference>
<dbReference type="PANTHER" id="PTHR12010">
    <property type="entry name" value="40S RIBOSOMAL PROTEIN S29"/>
    <property type="match status" value="1"/>
</dbReference>
<dbReference type="PANTHER" id="PTHR12010:SF2">
    <property type="entry name" value="40S RIBOSOMAL PROTEIN S29"/>
    <property type="match status" value="1"/>
</dbReference>
<dbReference type="Pfam" id="PF00253">
    <property type="entry name" value="Ribosomal_S14"/>
    <property type="match status" value="1"/>
</dbReference>
<dbReference type="PROSITE" id="PS00527">
    <property type="entry name" value="RIBOSOMAL_S14"/>
    <property type="match status" value="1"/>
</dbReference>
<name>RS14Z_METTH</name>
<gene>
    <name evidence="1" type="primary">rps14</name>
    <name type="ordered locus">MTH_17</name>
</gene>
<protein>
    <recommendedName>
        <fullName evidence="1">Small ribosomal subunit protein uS14</fullName>
    </recommendedName>
    <alternativeName>
        <fullName evidence="2">30S ribosomal protein S14 type Z</fullName>
    </alternativeName>
</protein>